<protein>
    <recommendedName>
        <fullName>Neuropeptide NPF-1</fullName>
        <shortName>Led-NPF-1</shortName>
    </recommendedName>
    <alternativeName>
        <fullName>Short neuropeptide F I</fullName>
    </alternativeName>
</protein>
<name>NPF1_LEPDE</name>
<keyword id="KW-0027">Amidation</keyword>
<keyword id="KW-0903">Direct protein sequencing</keyword>
<keyword id="KW-0372">Hormone</keyword>
<keyword id="KW-0527">Neuropeptide</keyword>
<keyword id="KW-0964">Secreted</keyword>
<comment type="function">
    <text evidence="3 4">Neuropeptide. Stimulates egg development in L.migratoria, but not in N.bullata. May be involved in the regulation of adult diapause.</text>
</comment>
<comment type="subcellular location">
    <subcellularLocation>
        <location evidence="1">Secreted</location>
    </subcellularLocation>
</comment>
<comment type="developmental stage">
    <text evidence="4">Found in the brain of non-diapausing beetles, but not in diapausing beetles.</text>
</comment>
<comment type="mass spectrometry" mass="1212.8" method="MALDI" evidence="5">
    <text>Using a Fisons mass spectrometer.</text>
</comment>
<comment type="mass spectrometry" mass="1212.3" method="MALDI" evidence="5">
    <text>Using a Bruker mass spectrometer.</text>
</comment>
<comment type="similarity">
    <text evidence="2">Belongs to the NPY family.</text>
</comment>
<dbReference type="GO" id="GO:0005576">
    <property type="term" value="C:extracellular region"/>
    <property type="evidence" value="ECO:0007669"/>
    <property type="project" value="UniProtKB-SubCell"/>
</dbReference>
<dbReference type="GO" id="GO:0005179">
    <property type="term" value="F:hormone activity"/>
    <property type="evidence" value="ECO:0007669"/>
    <property type="project" value="UniProtKB-KW"/>
</dbReference>
<dbReference type="GO" id="GO:0007218">
    <property type="term" value="P:neuropeptide signaling pathway"/>
    <property type="evidence" value="ECO:0007669"/>
    <property type="project" value="UniProtKB-KW"/>
</dbReference>
<reference evidence="6" key="1">
    <citation type="journal article" date="1996" name="Insect Biochem. Mol. Biol.">
        <title>Insect neuropeptide F (NPF)-related peptides: isolation from Colorado potato beetle (Leptinotarsa decemlineata) brain.</title>
        <authorList>
            <person name="Spittaels K."/>
            <person name="Verhaert P."/>
            <person name="Shaw C."/>
            <person name="Johnston R.N."/>
            <person name="Devreese B."/>
            <person name="Van Beeumen J."/>
            <person name="De Loof A."/>
        </authorList>
    </citation>
    <scope>PROTEIN SEQUENCE</scope>
    <scope>MASS SPECTROMETRY</scope>
    <scope>AMIDATION AT PHE-10</scope>
    <source>
        <tissue evidence="5">Cerebral ganglion</tissue>
    </source>
</reference>
<reference evidence="6" key="2">
    <citation type="journal article" date="1999" name="Peptides">
        <title>Led-NPF-1 stimulates ovarian development in locusts.</title>
        <authorList>
            <person name="Cerstiaens A."/>
            <person name="Benfekih L."/>
            <person name="Zouiten H."/>
            <person name="Verhaert P."/>
            <person name="De Loof A."/>
            <person name="Schoofs L."/>
        </authorList>
    </citation>
    <scope>FUNCTION</scope>
</reference>
<reference evidence="6" key="3">
    <citation type="journal article" date="2004" name="Biochem. Biophys. Res. Commun.">
        <title>Diapausing Colorado potato beetles are devoid of short neuropeptide F I and II.</title>
        <authorList>
            <person name="Huybrechts J."/>
            <person name="De Loof A."/>
            <person name="Schoofs L."/>
        </authorList>
    </citation>
    <scope>FUNCTION</scope>
    <scope>DEVELOPMENTAL STAGE</scope>
</reference>
<accession>Q9TWD6</accession>
<evidence type="ECO:0000250" key="1">
    <source>
        <dbReference type="UniProtKB" id="Q9VIQ0"/>
    </source>
</evidence>
<evidence type="ECO:0000255" key="2"/>
<evidence type="ECO:0000269" key="3">
    <source>
    </source>
</evidence>
<evidence type="ECO:0000269" key="4">
    <source>
    </source>
</evidence>
<evidence type="ECO:0000269" key="5">
    <source>
    </source>
</evidence>
<evidence type="ECO:0000305" key="6"/>
<sequence length="10" mass="1213">ARGPQLRLRF</sequence>
<feature type="peptide" id="PRO_0000328937" description="Neuropeptide NPF-1" evidence="5">
    <location>
        <begin position="1"/>
        <end position="10"/>
    </location>
</feature>
<feature type="modified residue" description="Phenylalanine amide" evidence="5">
    <location>
        <position position="10"/>
    </location>
</feature>
<organism>
    <name type="scientific">Leptinotarsa decemlineata</name>
    <name type="common">Colorado potato beetle</name>
    <name type="synonym">Doryphora decemlineata</name>
    <dbReference type="NCBI Taxonomy" id="7539"/>
    <lineage>
        <taxon>Eukaryota</taxon>
        <taxon>Metazoa</taxon>
        <taxon>Ecdysozoa</taxon>
        <taxon>Arthropoda</taxon>
        <taxon>Hexapoda</taxon>
        <taxon>Insecta</taxon>
        <taxon>Pterygota</taxon>
        <taxon>Neoptera</taxon>
        <taxon>Endopterygota</taxon>
        <taxon>Coleoptera</taxon>
        <taxon>Polyphaga</taxon>
        <taxon>Cucujiformia</taxon>
        <taxon>Chrysomeloidea</taxon>
        <taxon>Chrysomelidae</taxon>
        <taxon>Chrysomelinae</taxon>
        <taxon>Doryphorini</taxon>
        <taxon>Leptinotarsa</taxon>
    </lineage>
</organism>
<proteinExistence type="evidence at protein level"/>